<name>SHE3_LACTC</name>
<comment type="function">
    <text evidence="1">RNA-binding protein that binds specific mRNAs including the ASH1 mRNA, coding for a repressor of the HO endonuclease. Part of the mRNA localization machinery that restricts accumulation of certain proteins to the bud and in the daughter cell. Required for the delivery of cortical endoplasmic reticulum into the emerging bud (By similarity).</text>
</comment>
<comment type="subcellular location">
    <subcellularLocation>
        <location evidence="1">Endoplasmic reticulum membrane</location>
        <topology evidence="1">Peripheral membrane protein</topology>
    </subcellularLocation>
</comment>
<comment type="similarity">
    <text evidence="4">Belongs to the SHE3 family.</text>
</comment>
<accession>C5DLA5</accession>
<keyword id="KW-0175">Coiled coil</keyword>
<keyword id="KW-0256">Endoplasmic reticulum</keyword>
<keyword id="KW-0472">Membrane</keyword>
<keyword id="KW-0509">mRNA transport</keyword>
<keyword id="KW-1185">Reference proteome</keyword>
<keyword id="KW-0694">RNA-binding</keyword>
<keyword id="KW-0813">Transport</keyword>
<proteinExistence type="inferred from homology"/>
<protein>
    <recommendedName>
        <fullName>SWI5-dependent HO expression protein 3</fullName>
    </recommendedName>
</protein>
<gene>
    <name type="primary">SHE3</name>
    <name type="ordered locus">KLTH0F11396g</name>
</gene>
<organism>
    <name type="scientific">Lachancea thermotolerans (strain ATCC 56472 / CBS 6340 / NRRL Y-8284)</name>
    <name type="common">Yeast</name>
    <name type="synonym">Kluyveromyces thermotolerans</name>
    <dbReference type="NCBI Taxonomy" id="559295"/>
    <lineage>
        <taxon>Eukaryota</taxon>
        <taxon>Fungi</taxon>
        <taxon>Dikarya</taxon>
        <taxon>Ascomycota</taxon>
        <taxon>Saccharomycotina</taxon>
        <taxon>Saccharomycetes</taxon>
        <taxon>Saccharomycetales</taxon>
        <taxon>Saccharomycetaceae</taxon>
        <taxon>Lachancea</taxon>
    </lineage>
</organism>
<sequence length="423" mass="46671">MSNQEVDFQAAHLESPMKMSPSKVSMNHGAFMANMQNGYSPTREGATAGSSSTRVIEALHAQIDSLTKTNLDLTVQSNNLLSRLESSNNTQSKHLESISTLKHENDNLGLMLSRKERRVRDLEQQLSQLKHSYEEAAMDNKTMRHQLQTSGQREGTLENQLQQLQVQYDALVDGQKRYREKYDLEVEELKKSLQDFKRDNEMYLTKNIQTVVSNNTALQTKINQYSGKYKNLESLSQQHMQELSREVEGMASKLDLAKWEKLYEESRNMAIEYSEKTNVPLSPSFLAQHGAKSGSRSPSTSSSSTFVHPSQIRVPKVRHSSSSAKRSSFYGSNVSVPGGTVPGVKQPSASPTTPSSGGLPGVRRSSSVRGSSSSSRNSSGDLASAESAAQSQKGASKNSANNKKKRMSSHSYSKSNGFSFGEP</sequence>
<feature type="chain" id="PRO_0000408933" description="SWI5-dependent HO expression protein 3">
    <location>
        <begin position="1"/>
        <end position="423"/>
    </location>
</feature>
<feature type="region of interest" description="Disordered" evidence="3">
    <location>
        <begin position="284"/>
        <end position="423"/>
    </location>
</feature>
<feature type="coiled-coil region" evidence="2">
    <location>
        <begin position="101"/>
        <end position="260"/>
    </location>
</feature>
<feature type="compositionally biased region" description="Low complexity" evidence="3">
    <location>
        <begin position="293"/>
        <end position="304"/>
    </location>
</feature>
<feature type="compositionally biased region" description="Low complexity" evidence="3">
    <location>
        <begin position="320"/>
        <end position="332"/>
    </location>
</feature>
<feature type="compositionally biased region" description="Low complexity" evidence="3">
    <location>
        <begin position="347"/>
        <end position="380"/>
    </location>
</feature>
<feature type="compositionally biased region" description="Low complexity" evidence="3">
    <location>
        <begin position="391"/>
        <end position="401"/>
    </location>
</feature>
<feature type="compositionally biased region" description="Polar residues" evidence="3">
    <location>
        <begin position="410"/>
        <end position="423"/>
    </location>
</feature>
<dbReference type="EMBL" id="CU928170">
    <property type="protein sequence ID" value="CAR24256.1"/>
    <property type="molecule type" value="Genomic_DNA"/>
</dbReference>
<dbReference type="RefSeq" id="XP_002554693.1">
    <property type="nucleotide sequence ID" value="XM_002554647.1"/>
</dbReference>
<dbReference type="SMR" id="C5DLA5"/>
<dbReference type="FunCoup" id="C5DLA5">
    <property type="interactions" value="1503"/>
</dbReference>
<dbReference type="STRING" id="559295.C5DLA5"/>
<dbReference type="GeneID" id="8292906"/>
<dbReference type="KEGG" id="lth:KLTH0F11396g"/>
<dbReference type="eggNOG" id="ENOG502QSQX">
    <property type="taxonomic scope" value="Eukaryota"/>
</dbReference>
<dbReference type="HOGENOM" id="CLU_038734_0_0_1"/>
<dbReference type="InParanoid" id="C5DLA5"/>
<dbReference type="OMA" id="HFMANIN"/>
<dbReference type="OrthoDB" id="6088208at2759"/>
<dbReference type="Proteomes" id="UP000002036">
    <property type="component" value="Chromosome F"/>
</dbReference>
<dbReference type="GO" id="GO:0005789">
    <property type="term" value="C:endoplasmic reticulum membrane"/>
    <property type="evidence" value="ECO:0007669"/>
    <property type="project" value="UniProtKB-SubCell"/>
</dbReference>
<dbReference type="GO" id="GO:0003723">
    <property type="term" value="F:RNA binding"/>
    <property type="evidence" value="ECO:0007669"/>
    <property type="project" value="UniProtKB-KW"/>
</dbReference>
<dbReference type="GO" id="GO:0048309">
    <property type="term" value="P:endoplasmic reticulum inheritance"/>
    <property type="evidence" value="ECO:0007669"/>
    <property type="project" value="InterPro"/>
</dbReference>
<dbReference type="GO" id="GO:0051028">
    <property type="term" value="P:mRNA transport"/>
    <property type="evidence" value="ECO:0007669"/>
    <property type="project" value="UniProtKB-KW"/>
</dbReference>
<dbReference type="Gene3D" id="1.20.1270.60">
    <property type="entry name" value="Arfaptin homology (AH) domain/BAR domain"/>
    <property type="match status" value="1"/>
</dbReference>
<dbReference type="InterPro" id="IPR027267">
    <property type="entry name" value="AH/BAR_dom_sf"/>
</dbReference>
<dbReference type="InterPro" id="IPR031398">
    <property type="entry name" value="She3"/>
</dbReference>
<dbReference type="Pfam" id="PF17078">
    <property type="entry name" value="SHE3"/>
    <property type="match status" value="1"/>
</dbReference>
<dbReference type="SUPFAM" id="SSF103657">
    <property type="entry name" value="BAR/IMD domain-like"/>
    <property type="match status" value="1"/>
</dbReference>
<reference key="1">
    <citation type="journal article" date="2009" name="Genome Res.">
        <title>Comparative genomics of protoploid Saccharomycetaceae.</title>
        <authorList>
            <consortium name="The Genolevures Consortium"/>
            <person name="Souciet J.-L."/>
            <person name="Dujon B."/>
            <person name="Gaillardin C."/>
            <person name="Johnston M."/>
            <person name="Baret P.V."/>
            <person name="Cliften P."/>
            <person name="Sherman D.J."/>
            <person name="Weissenbach J."/>
            <person name="Westhof E."/>
            <person name="Wincker P."/>
            <person name="Jubin C."/>
            <person name="Poulain J."/>
            <person name="Barbe V."/>
            <person name="Segurens B."/>
            <person name="Artiguenave F."/>
            <person name="Anthouard V."/>
            <person name="Vacherie B."/>
            <person name="Val M.-E."/>
            <person name="Fulton R.S."/>
            <person name="Minx P."/>
            <person name="Wilson R."/>
            <person name="Durrens P."/>
            <person name="Jean G."/>
            <person name="Marck C."/>
            <person name="Martin T."/>
            <person name="Nikolski M."/>
            <person name="Rolland T."/>
            <person name="Seret M.-L."/>
            <person name="Casaregola S."/>
            <person name="Despons L."/>
            <person name="Fairhead C."/>
            <person name="Fischer G."/>
            <person name="Lafontaine I."/>
            <person name="Leh V."/>
            <person name="Lemaire M."/>
            <person name="de Montigny J."/>
            <person name="Neuveglise C."/>
            <person name="Thierry A."/>
            <person name="Blanc-Lenfle I."/>
            <person name="Bleykasten C."/>
            <person name="Diffels J."/>
            <person name="Fritsch E."/>
            <person name="Frangeul L."/>
            <person name="Goeffon A."/>
            <person name="Jauniaux N."/>
            <person name="Kachouri-Lafond R."/>
            <person name="Payen C."/>
            <person name="Potier S."/>
            <person name="Pribylova L."/>
            <person name="Ozanne C."/>
            <person name="Richard G.-F."/>
            <person name="Sacerdot C."/>
            <person name="Straub M.-L."/>
            <person name="Talla E."/>
        </authorList>
    </citation>
    <scope>NUCLEOTIDE SEQUENCE [LARGE SCALE GENOMIC DNA]</scope>
    <source>
        <strain>ATCC 56472 / CBS 6340 / NRRL Y-8284</strain>
    </source>
</reference>
<evidence type="ECO:0000250" key="1"/>
<evidence type="ECO:0000255" key="2"/>
<evidence type="ECO:0000256" key="3">
    <source>
        <dbReference type="SAM" id="MobiDB-lite"/>
    </source>
</evidence>
<evidence type="ECO:0000305" key="4"/>